<gene>
    <name evidence="1" type="primary">tpm</name>
    <name type="ordered locus">Xaut_2726</name>
</gene>
<dbReference type="EC" id="2.1.1.67" evidence="1"/>
<dbReference type="EMBL" id="CP000781">
    <property type="protein sequence ID" value="ABS67966.1"/>
    <property type="molecule type" value="Genomic_DNA"/>
</dbReference>
<dbReference type="SMR" id="A7IIX3"/>
<dbReference type="STRING" id="78245.Xaut_2726"/>
<dbReference type="KEGG" id="xau:Xaut_2726"/>
<dbReference type="eggNOG" id="COG0500">
    <property type="taxonomic scope" value="Bacteria"/>
</dbReference>
<dbReference type="HOGENOM" id="CLU_085515_1_0_5"/>
<dbReference type="OrthoDB" id="9778208at2"/>
<dbReference type="PhylomeDB" id="A7IIX3"/>
<dbReference type="Proteomes" id="UP000002417">
    <property type="component" value="Chromosome"/>
</dbReference>
<dbReference type="GO" id="GO:0005737">
    <property type="term" value="C:cytoplasm"/>
    <property type="evidence" value="ECO:0007669"/>
    <property type="project" value="UniProtKB-SubCell"/>
</dbReference>
<dbReference type="GO" id="GO:0008119">
    <property type="term" value="F:thiopurine S-methyltransferase activity"/>
    <property type="evidence" value="ECO:0007669"/>
    <property type="project" value="UniProtKB-UniRule"/>
</dbReference>
<dbReference type="GO" id="GO:0032259">
    <property type="term" value="P:methylation"/>
    <property type="evidence" value="ECO:0007669"/>
    <property type="project" value="UniProtKB-KW"/>
</dbReference>
<dbReference type="GO" id="GO:0010038">
    <property type="term" value="P:response to metal ion"/>
    <property type="evidence" value="ECO:0007669"/>
    <property type="project" value="InterPro"/>
</dbReference>
<dbReference type="FunFam" id="3.40.50.150:FF:000101">
    <property type="entry name" value="Thiopurine S-methyltransferase"/>
    <property type="match status" value="1"/>
</dbReference>
<dbReference type="Gene3D" id="3.40.50.150">
    <property type="entry name" value="Vaccinia Virus protein VP39"/>
    <property type="match status" value="1"/>
</dbReference>
<dbReference type="HAMAP" id="MF_00812">
    <property type="entry name" value="Thiopur_methtran"/>
    <property type="match status" value="1"/>
</dbReference>
<dbReference type="InterPro" id="IPR029063">
    <property type="entry name" value="SAM-dependent_MTases_sf"/>
</dbReference>
<dbReference type="InterPro" id="IPR022474">
    <property type="entry name" value="Thiopur_S-MeTfrase_Se/Te_detox"/>
</dbReference>
<dbReference type="InterPro" id="IPR025835">
    <property type="entry name" value="Thiopurine_S-MeTrfase"/>
</dbReference>
<dbReference type="InterPro" id="IPR008854">
    <property type="entry name" value="TPMT"/>
</dbReference>
<dbReference type="NCBIfam" id="TIGR03840">
    <property type="entry name" value="TMPT_Se_Te"/>
    <property type="match status" value="1"/>
</dbReference>
<dbReference type="PANTHER" id="PTHR10259">
    <property type="entry name" value="THIOPURINE S-METHYLTRANSFERASE"/>
    <property type="match status" value="1"/>
</dbReference>
<dbReference type="PANTHER" id="PTHR10259:SF11">
    <property type="entry name" value="THIOPURINE S-METHYLTRANSFERASE"/>
    <property type="match status" value="1"/>
</dbReference>
<dbReference type="Pfam" id="PF05724">
    <property type="entry name" value="TPMT"/>
    <property type="match status" value="1"/>
</dbReference>
<dbReference type="PIRSF" id="PIRSF023956">
    <property type="entry name" value="Thiopurine_S-methyltransferase"/>
    <property type="match status" value="1"/>
</dbReference>
<dbReference type="SUPFAM" id="SSF53335">
    <property type="entry name" value="S-adenosyl-L-methionine-dependent methyltransferases"/>
    <property type="match status" value="1"/>
</dbReference>
<dbReference type="PROSITE" id="PS51585">
    <property type="entry name" value="SAM_MT_TPMT"/>
    <property type="match status" value="1"/>
</dbReference>
<keyword id="KW-0963">Cytoplasm</keyword>
<keyword id="KW-0489">Methyltransferase</keyword>
<keyword id="KW-1185">Reference proteome</keyword>
<keyword id="KW-0949">S-adenosyl-L-methionine</keyword>
<keyword id="KW-0808">Transferase</keyword>
<protein>
    <recommendedName>
        <fullName evidence="1">Thiopurine S-methyltransferase</fullName>
        <ecNumber evidence="1">2.1.1.67</ecNumber>
    </recommendedName>
    <alternativeName>
        <fullName evidence="1">Thiopurine methyltransferase</fullName>
    </alternativeName>
</protein>
<evidence type="ECO:0000255" key="1">
    <source>
        <dbReference type="HAMAP-Rule" id="MF_00812"/>
    </source>
</evidence>
<accession>A7IIX3</accession>
<reference key="1">
    <citation type="submission" date="2007-07" db="EMBL/GenBank/DDBJ databases">
        <title>Complete sequence of chromosome of Xanthobacter autotrophicus Py2.</title>
        <authorList>
            <consortium name="US DOE Joint Genome Institute"/>
            <person name="Copeland A."/>
            <person name="Lucas S."/>
            <person name="Lapidus A."/>
            <person name="Barry K."/>
            <person name="Glavina del Rio T."/>
            <person name="Hammon N."/>
            <person name="Israni S."/>
            <person name="Dalin E."/>
            <person name="Tice H."/>
            <person name="Pitluck S."/>
            <person name="Sims D."/>
            <person name="Brettin T."/>
            <person name="Bruce D."/>
            <person name="Detter J.C."/>
            <person name="Han C."/>
            <person name="Tapia R."/>
            <person name="Brainard J."/>
            <person name="Schmutz J."/>
            <person name="Larimer F."/>
            <person name="Land M."/>
            <person name="Hauser L."/>
            <person name="Kyrpides N."/>
            <person name="Kim E."/>
            <person name="Ensigns S.A."/>
            <person name="Richardson P."/>
        </authorList>
    </citation>
    <scope>NUCLEOTIDE SEQUENCE [LARGE SCALE GENOMIC DNA]</scope>
    <source>
        <strain>ATCC BAA-1158 / Py2</strain>
    </source>
</reference>
<feature type="chain" id="PRO_1000134083" description="Thiopurine S-methyltransferase">
    <location>
        <begin position="1"/>
        <end position="213"/>
    </location>
</feature>
<feature type="binding site" evidence="1">
    <location>
        <position position="10"/>
    </location>
    <ligand>
        <name>S-adenosyl-L-methionine</name>
        <dbReference type="ChEBI" id="CHEBI:59789"/>
    </ligand>
</feature>
<feature type="binding site" evidence="1">
    <location>
        <position position="46"/>
    </location>
    <ligand>
        <name>S-adenosyl-L-methionine</name>
        <dbReference type="ChEBI" id="CHEBI:59789"/>
    </ligand>
</feature>
<feature type="binding site" evidence="1">
    <location>
        <position position="67"/>
    </location>
    <ligand>
        <name>S-adenosyl-L-methionine</name>
        <dbReference type="ChEBI" id="CHEBI:59789"/>
    </ligand>
</feature>
<feature type="binding site" evidence="1">
    <location>
        <position position="124"/>
    </location>
    <ligand>
        <name>S-adenosyl-L-methionine</name>
        <dbReference type="ChEBI" id="CHEBI:59789"/>
    </ligand>
</feature>
<name>TPMT_XANP2</name>
<comment type="catalytic activity">
    <reaction evidence="1">
        <text>S-adenosyl-L-methionine + a thiopurine = S-adenosyl-L-homocysteine + a thiopurine S-methylether.</text>
        <dbReference type="EC" id="2.1.1.67"/>
    </reaction>
</comment>
<comment type="subcellular location">
    <subcellularLocation>
        <location evidence="1">Cytoplasm</location>
    </subcellularLocation>
</comment>
<comment type="similarity">
    <text evidence="1">Belongs to the class I-like SAM-binding methyltransferase superfamily. TPMT family.</text>
</comment>
<organism>
    <name type="scientific">Xanthobacter autotrophicus (strain ATCC BAA-1158 / Py2)</name>
    <dbReference type="NCBI Taxonomy" id="78245"/>
    <lineage>
        <taxon>Bacteria</taxon>
        <taxon>Pseudomonadati</taxon>
        <taxon>Pseudomonadota</taxon>
        <taxon>Alphaproteobacteria</taxon>
        <taxon>Hyphomicrobiales</taxon>
        <taxon>Xanthobacteraceae</taxon>
        <taxon>Xanthobacter</taxon>
    </lineage>
</organism>
<proteinExistence type="inferred from homology"/>
<sequence length="213" mass="23278">MEPDFWHARWQTKQIQGFHEGKANAFLVKHFPRLPVAPGARVFVPLCGKTRDIAWLLGEGFRVAGAELSRIAVEELFAELGVVPEVTTQGAHTRFSAPGLDIFQGDIFALTPDTLGPVDAVWDRAALVALPKDMRARYAPHLVALTDTAPQLLVCFEYDQPLLAGPPFSVPPEETRTLYGADYVVAAIDTAPVPGGLKGQCEAVEHVWLLERA</sequence>